<keyword id="KW-1185">Reference proteome</keyword>
<feature type="chain" id="PRO_0000369126" description="SPbeta prophage-derived uncharacterized protein YorV">
    <location>
        <begin position="1"/>
        <end position="72"/>
    </location>
</feature>
<dbReference type="EMBL" id="AL009126">
    <property type="protein sequence ID" value="CAB13916.1"/>
    <property type="molecule type" value="Genomic_DNA"/>
</dbReference>
<dbReference type="RefSeq" id="NP_389906.1">
    <property type="nucleotide sequence ID" value="NC_000964.3"/>
</dbReference>
<dbReference type="RefSeq" id="WP_004399346.1">
    <property type="nucleotide sequence ID" value="NZ_OZ025638.1"/>
</dbReference>
<dbReference type="SMR" id="O31893"/>
<dbReference type="FunCoup" id="O31893">
    <property type="interactions" value="33"/>
</dbReference>
<dbReference type="STRING" id="224308.BSU20240"/>
<dbReference type="PaxDb" id="224308-BSU20240"/>
<dbReference type="EnsemblBacteria" id="CAB13916">
    <property type="protein sequence ID" value="CAB13916"/>
    <property type="gene ID" value="BSU_20240"/>
</dbReference>
<dbReference type="GeneID" id="939579"/>
<dbReference type="KEGG" id="bsu:BSU20240"/>
<dbReference type="PATRIC" id="fig|224308.179.peg.2214"/>
<dbReference type="InParanoid" id="O31893"/>
<dbReference type="OrthoDB" id="2909809at2"/>
<dbReference type="BioCyc" id="BSUB:BSU20240-MONOMER"/>
<dbReference type="Proteomes" id="UP000001570">
    <property type="component" value="Chromosome"/>
</dbReference>
<protein>
    <recommendedName>
        <fullName>SPbeta prophage-derived uncharacterized protein YorV</fullName>
    </recommendedName>
</protein>
<accession>O31893</accession>
<gene>
    <name type="primary">yorV</name>
    <name type="ordered locus">BSU20240</name>
</gene>
<name>YORV_BACSU</name>
<proteinExistence type="predicted"/>
<reference key="1">
    <citation type="journal article" date="1997" name="Nature">
        <title>The complete genome sequence of the Gram-positive bacterium Bacillus subtilis.</title>
        <authorList>
            <person name="Kunst F."/>
            <person name="Ogasawara N."/>
            <person name="Moszer I."/>
            <person name="Albertini A.M."/>
            <person name="Alloni G."/>
            <person name="Azevedo V."/>
            <person name="Bertero M.G."/>
            <person name="Bessieres P."/>
            <person name="Bolotin A."/>
            <person name="Borchert S."/>
            <person name="Borriss R."/>
            <person name="Boursier L."/>
            <person name="Brans A."/>
            <person name="Braun M."/>
            <person name="Brignell S.C."/>
            <person name="Bron S."/>
            <person name="Brouillet S."/>
            <person name="Bruschi C.V."/>
            <person name="Caldwell B."/>
            <person name="Capuano V."/>
            <person name="Carter N.M."/>
            <person name="Choi S.-K."/>
            <person name="Codani J.-J."/>
            <person name="Connerton I.F."/>
            <person name="Cummings N.J."/>
            <person name="Daniel R.A."/>
            <person name="Denizot F."/>
            <person name="Devine K.M."/>
            <person name="Duesterhoeft A."/>
            <person name="Ehrlich S.D."/>
            <person name="Emmerson P.T."/>
            <person name="Entian K.-D."/>
            <person name="Errington J."/>
            <person name="Fabret C."/>
            <person name="Ferrari E."/>
            <person name="Foulger D."/>
            <person name="Fritz C."/>
            <person name="Fujita M."/>
            <person name="Fujita Y."/>
            <person name="Fuma S."/>
            <person name="Galizzi A."/>
            <person name="Galleron N."/>
            <person name="Ghim S.-Y."/>
            <person name="Glaser P."/>
            <person name="Goffeau A."/>
            <person name="Golightly E.J."/>
            <person name="Grandi G."/>
            <person name="Guiseppi G."/>
            <person name="Guy B.J."/>
            <person name="Haga K."/>
            <person name="Haiech J."/>
            <person name="Harwood C.R."/>
            <person name="Henaut A."/>
            <person name="Hilbert H."/>
            <person name="Holsappel S."/>
            <person name="Hosono S."/>
            <person name="Hullo M.-F."/>
            <person name="Itaya M."/>
            <person name="Jones L.-M."/>
            <person name="Joris B."/>
            <person name="Karamata D."/>
            <person name="Kasahara Y."/>
            <person name="Klaerr-Blanchard M."/>
            <person name="Klein C."/>
            <person name="Kobayashi Y."/>
            <person name="Koetter P."/>
            <person name="Koningstein G."/>
            <person name="Krogh S."/>
            <person name="Kumano M."/>
            <person name="Kurita K."/>
            <person name="Lapidus A."/>
            <person name="Lardinois S."/>
            <person name="Lauber J."/>
            <person name="Lazarevic V."/>
            <person name="Lee S.-M."/>
            <person name="Levine A."/>
            <person name="Liu H."/>
            <person name="Masuda S."/>
            <person name="Mauel C."/>
            <person name="Medigue C."/>
            <person name="Medina N."/>
            <person name="Mellado R.P."/>
            <person name="Mizuno M."/>
            <person name="Moestl D."/>
            <person name="Nakai S."/>
            <person name="Noback M."/>
            <person name="Noone D."/>
            <person name="O'Reilly M."/>
            <person name="Ogawa K."/>
            <person name="Ogiwara A."/>
            <person name="Oudega B."/>
            <person name="Park S.-H."/>
            <person name="Parro V."/>
            <person name="Pohl T.M."/>
            <person name="Portetelle D."/>
            <person name="Porwollik S."/>
            <person name="Prescott A.M."/>
            <person name="Presecan E."/>
            <person name="Pujic P."/>
            <person name="Purnelle B."/>
            <person name="Rapoport G."/>
            <person name="Rey M."/>
            <person name="Reynolds S."/>
            <person name="Rieger M."/>
            <person name="Rivolta C."/>
            <person name="Rocha E."/>
            <person name="Roche B."/>
            <person name="Rose M."/>
            <person name="Sadaie Y."/>
            <person name="Sato T."/>
            <person name="Scanlan E."/>
            <person name="Schleich S."/>
            <person name="Schroeter R."/>
            <person name="Scoffone F."/>
            <person name="Sekiguchi J."/>
            <person name="Sekowska A."/>
            <person name="Seror S.J."/>
            <person name="Serror P."/>
            <person name="Shin B.-S."/>
            <person name="Soldo B."/>
            <person name="Sorokin A."/>
            <person name="Tacconi E."/>
            <person name="Takagi T."/>
            <person name="Takahashi H."/>
            <person name="Takemaru K."/>
            <person name="Takeuchi M."/>
            <person name="Tamakoshi A."/>
            <person name="Tanaka T."/>
            <person name="Terpstra P."/>
            <person name="Tognoni A."/>
            <person name="Tosato V."/>
            <person name="Uchiyama S."/>
            <person name="Vandenbol M."/>
            <person name="Vannier F."/>
            <person name="Vassarotti A."/>
            <person name="Viari A."/>
            <person name="Wambutt R."/>
            <person name="Wedler E."/>
            <person name="Wedler H."/>
            <person name="Weitzenegger T."/>
            <person name="Winters P."/>
            <person name="Wipat A."/>
            <person name="Yamamoto H."/>
            <person name="Yamane K."/>
            <person name="Yasumoto K."/>
            <person name="Yata K."/>
            <person name="Yoshida K."/>
            <person name="Yoshikawa H.-F."/>
            <person name="Zumstein E."/>
            <person name="Yoshikawa H."/>
            <person name="Danchin A."/>
        </authorList>
    </citation>
    <scope>NUCLEOTIDE SEQUENCE [LARGE SCALE GENOMIC DNA]</scope>
    <source>
        <strain>168</strain>
    </source>
</reference>
<sequence length="72" mass="8465">MDSYPESLKKETEEIKERVRNGNIKEDKIKEIAETTVEFLKSEEKRHKYFSEVAAAMADNLSEFFKSYLKGE</sequence>
<organism>
    <name type="scientific">Bacillus subtilis (strain 168)</name>
    <dbReference type="NCBI Taxonomy" id="224308"/>
    <lineage>
        <taxon>Bacteria</taxon>
        <taxon>Bacillati</taxon>
        <taxon>Bacillota</taxon>
        <taxon>Bacilli</taxon>
        <taxon>Bacillales</taxon>
        <taxon>Bacillaceae</taxon>
        <taxon>Bacillus</taxon>
    </lineage>
</organism>